<name>H2A4_CHICK</name>
<feature type="initiator methionine" description="Removed" evidence="6">
    <location>
        <position position="1"/>
    </location>
</feature>
<feature type="chain" id="PRO_0000055215" description="Histone H2A-IV">
    <location>
        <begin position="2"/>
        <end position="129"/>
    </location>
</feature>
<feature type="region of interest" description="Disordered" evidence="4">
    <location>
        <begin position="1"/>
        <end position="22"/>
    </location>
</feature>
<feature type="compositionally biased region" description="Basic residues" evidence="4">
    <location>
        <begin position="7"/>
        <end position="19"/>
    </location>
</feature>
<feature type="modified residue" description="N-acetylserine" evidence="6">
    <location>
        <position position="2"/>
    </location>
</feature>
<feature type="modified residue" description="Phosphoserine" evidence="1">
    <location>
        <position position="2"/>
    </location>
</feature>
<feature type="modified residue" description="N6-(2-hydroxyisobutyryl)lysine" evidence="3">
    <location>
        <position position="6"/>
    </location>
</feature>
<feature type="modified residue" description="N6-acetyllysine" evidence="5">
    <location>
        <position position="6"/>
    </location>
</feature>
<feature type="modified residue" description="N6-(2-hydroxyisobutyryl)lysine; alternate" evidence="3">
    <location>
        <position position="10"/>
    </location>
</feature>
<feature type="modified residue" description="N6-acetyllysine" evidence="5">
    <location>
        <position position="10"/>
    </location>
</feature>
<feature type="modified residue" description="N6-lactoyllysine; alternate" evidence="2">
    <location>
        <position position="10"/>
    </location>
</feature>
<feature type="modified residue" description="N6-succinyllysine" evidence="3">
    <location>
        <position position="10"/>
    </location>
</feature>
<feature type="modified residue" description="N6-(2-hydroxyisobutyryl)lysine; alternate" evidence="3">
    <location>
        <position position="37"/>
    </location>
</feature>
<feature type="modified residue" description="N6-(2-hydroxyisobutyryl)lysine" evidence="3">
    <location>
        <position position="75"/>
    </location>
</feature>
<feature type="modified residue" description="N6-(2-hydroxyisobutyryl)lysine" evidence="3">
    <location>
        <position position="76"/>
    </location>
</feature>
<feature type="modified residue" description="N6-(2-hydroxyisobutyryl)lysine; alternate" evidence="3">
    <location>
        <position position="96"/>
    </location>
</feature>
<feature type="modified residue" description="N6-glutaryllysine; alternate" evidence="3">
    <location>
        <position position="96"/>
    </location>
</feature>
<feature type="modified residue" description="N6-succinyllysine" evidence="3">
    <location>
        <position position="96"/>
    </location>
</feature>
<feature type="modified residue" description="N6-glutaryllysine" evidence="3">
    <location>
        <position position="100"/>
    </location>
</feature>
<feature type="modified residue" description="N5-methylglutamine" evidence="1">
    <location>
        <position position="105"/>
    </location>
</feature>
<feature type="modified residue" description="N6-(2-hydroxyisobutyryl)lysine; alternate" evidence="3">
    <location>
        <position position="119"/>
    </location>
</feature>
<feature type="modified residue" description="N6-glutaryllysine; alternate" evidence="3">
    <location>
        <position position="119"/>
    </location>
</feature>
<feature type="modified residue" description="N6-glutaryllysine; alternate" evidence="3">
    <location>
        <position position="120"/>
    </location>
</feature>
<feature type="cross-link" description="Glycyl lysine isopeptide (Lys-Gly) (interchain with G-Cter in ubiquitin)" evidence="1">
    <location>
        <position position="14"/>
    </location>
</feature>
<feature type="cross-link" description="Glycyl lysine isopeptide (Lys-Gly) (interchain with G-Cter in ubiquitin)" evidence="1">
    <location>
        <position position="16"/>
    </location>
</feature>
<feature type="cross-link" description="Glycyl lysine isopeptide (Lys-Gly) (interchain with G-Cter in ubiquitin)" evidence="8">
    <location>
        <position position="120"/>
    </location>
</feature>
<feature type="sequence conflict" description="In Ref. 3; CAA23704." evidence="7" ref="3">
    <original>V</original>
    <variation>L</variation>
    <location>
        <position position="50"/>
    </location>
</feature>
<feature type="sequence conflict" description="In Ref. 4; AA sequence." evidence="7" ref="4">
    <original>KA</original>
    <variation>AG</variation>
    <location>
        <begin position="127"/>
        <end position="128"/>
    </location>
</feature>
<feature type="strand" evidence="9">
    <location>
        <begin position="11"/>
        <end position="14"/>
    </location>
</feature>
<feature type="helix" evidence="10">
    <location>
        <begin position="18"/>
        <end position="21"/>
    </location>
</feature>
<feature type="helix" evidence="10">
    <location>
        <begin position="28"/>
        <end position="37"/>
    </location>
</feature>
<feature type="strand" evidence="10">
    <location>
        <begin position="40"/>
        <end position="44"/>
    </location>
</feature>
<feature type="helix" evidence="10">
    <location>
        <begin position="47"/>
        <end position="73"/>
    </location>
</feature>
<feature type="strand" evidence="10">
    <location>
        <begin position="77"/>
        <end position="79"/>
    </location>
</feature>
<feature type="helix" evidence="10">
    <location>
        <begin position="81"/>
        <end position="89"/>
    </location>
</feature>
<feature type="helix" evidence="10">
    <location>
        <begin position="92"/>
        <end position="97"/>
    </location>
</feature>
<feature type="turn" evidence="10">
    <location>
        <begin position="98"/>
        <end position="100"/>
    </location>
</feature>
<feature type="strand" evidence="10">
    <location>
        <begin position="101"/>
        <end position="103"/>
    </location>
</feature>
<feature type="turn" evidence="11">
    <location>
        <begin position="104"/>
        <end position="106"/>
    </location>
</feature>
<feature type="helix" evidence="10">
    <location>
        <begin position="114"/>
        <end position="116"/>
    </location>
</feature>
<keyword id="KW-0002">3D-structure</keyword>
<keyword id="KW-0007">Acetylation</keyword>
<keyword id="KW-0158">Chromosome</keyword>
<keyword id="KW-0903">Direct protein sequencing</keyword>
<keyword id="KW-0238">DNA-binding</keyword>
<keyword id="KW-0379">Hydroxylation</keyword>
<keyword id="KW-1017">Isopeptide bond</keyword>
<keyword id="KW-0488">Methylation</keyword>
<keyword id="KW-0544">Nucleosome core</keyword>
<keyword id="KW-0539">Nucleus</keyword>
<keyword id="KW-0597">Phosphoprotein</keyword>
<keyword id="KW-1185">Reference proteome</keyword>
<keyword id="KW-0832">Ubl conjugation</keyword>
<proteinExistence type="evidence at protein level"/>
<sequence>MSGRGKQGGKARAKAKSRSSRAGLQFPVGRVHRLLRKGNYAERVGAGAPVYLAAVLEYLTAEILELAGNAARDNKKTRIIPRHLQLAIRNDEELNKLLGKVTIAQGGVLPNIQAVLLPKKTDSHKAKAK</sequence>
<evidence type="ECO:0000250" key="1"/>
<evidence type="ECO:0000250" key="2">
    <source>
        <dbReference type="UniProtKB" id="P0C0S5"/>
    </source>
</evidence>
<evidence type="ECO:0000250" key="3">
    <source>
        <dbReference type="UniProtKB" id="P0C0S8"/>
    </source>
</evidence>
<evidence type="ECO:0000256" key="4">
    <source>
        <dbReference type="SAM" id="MobiDB-lite"/>
    </source>
</evidence>
<evidence type="ECO:0000269" key="5">
    <source>
    </source>
</evidence>
<evidence type="ECO:0000269" key="6">
    <source>
    </source>
</evidence>
<evidence type="ECO:0000305" key="7"/>
<evidence type="ECO:0000305" key="8">
    <source>
    </source>
</evidence>
<evidence type="ECO:0007829" key="9">
    <source>
        <dbReference type="PDB" id="1EQZ"/>
    </source>
</evidence>
<evidence type="ECO:0007829" key="10">
    <source>
        <dbReference type="PDB" id="1TZY"/>
    </source>
</evidence>
<evidence type="ECO:0007829" key="11">
    <source>
        <dbReference type="PDB" id="2HIO"/>
    </source>
</evidence>
<dbReference type="EMBL" id="D11055">
    <property type="protein sequence ID" value="BAA01798.1"/>
    <property type="molecule type" value="Genomic_DNA"/>
</dbReference>
<dbReference type="EMBL" id="V00413">
    <property type="protein sequence ID" value="CAA23704.1"/>
    <property type="molecule type" value="Genomic_DNA"/>
</dbReference>
<dbReference type="EMBL" id="X02218">
    <property type="protein sequence ID" value="CAA26139.1"/>
    <property type="molecule type" value="Genomic_DNA"/>
</dbReference>
<dbReference type="PIR" id="B93556">
    <property type="entry name" value="HSCH2A"/>
</dbReference>
<dbReference type="RefSeq" id="NP_001072943.1">
    <property type="nucleotide sequence ID" value="NM_001079475.2"/>
</dbReference>
<dbReference type="RefSeq" id="NP_001264997.1">
    <property type="nucleotide sequence ID" value="NM_001278068.2"/>
</dbReference>
<dbReference type="RefSeq" id="NP_001268410.1">
    <property type="nucleotide sequence ID" value="NM_001281481.2"/>
</dbReference>
<dbReference type="RefSeq" id="NP_001383544.1">
    <property type="nucleotide sequence ID" value="NM_001396615.1"/>
</dbReference>
<dbReference type="RefSeq" id="NP_001385074.1">
    <property type="nucleotide sequence ID" value="NM_001398145.1"/>
</dbReference>
<dbReference type="RefSeq" id="XP_004937728.1">
    <property type="nucleotide sequence ID" value="XM_004937671.2"/>
</dbReference>
<dbReference type="RefSeq" id="XP_040516417.1">
    <property type="nucleotide sequence ID" value="XM_040660483.2"/>
</dbReference>
<dbReference type="RefSeq" id="XP_040516419.1">
    <property type="nucleotide sequence ID" value="XM_040660485.2"/>
</dbReference>
<dbReference type="RefSeq" id="XP_040524076.1">
    <property type="nucleotide sequence ID" value="XM_040668142.2"/>
</dbReference>
<dbReference type="RefSeq" id="XP_425455.2">
    <property type="nucleotide sequence ID" value="XM_425455.4"/>
</dbReference>
<dbReference type="RefSeq" id="XP_425465.1">
    <property type="nucleotide sequence ID" value="XM_425465.3"/>
</dbReference>
<dbReference type="RefSeq" id="XP_425469.1">
    <property type="nucleotide sequence ID" value="XM_425469.8"/>
</dbReference>
<dbReference type="PDB" id="1EQZ">
    <property type="method" value="X-ray"/>
    <property type="resolution" value="2.50 A"/>
    <property type="chains" value="A/E=1-129"/>
</dbReference>
<dbReference type="PDB" id="1HIO">
    <property type="method" value="X-ray"/>
    <property type="resolution" value="3.10 A"/>
    <property type="chains" value="A=16-110"/>
</dbReference>
<dbReference type="PDB" id="1HQ3">
    <property type="method" value="X-ray"/>
    <property type="resolution" value="2.15 A"/>
    <property type="chains" value="A/E=1-129"/>
</dbReference>
<dbReference type="PDB" id="1TZY">
    <property type="method" value="X-ray"/>
    <property type="resolution" value="1.90 A"/>
    <property type="chains" value="A/E=1-129"/>
</dbReference>
<dbReference type="PDB" id="2ARO">
    <property type="method" value="X-ray"/>
    <property type="resolution" value="2.10 A"/>
    <property type="chains" value="A/E=1-129"/>
</dbReference>
<dbReference type="PDB" id="2HIO">
    <property type="method" value="X-ray"/>
    <property type="resolution" value="3.10 A"/>
    <property type="chains" value="A=2-129"/>
</dbReference>
<dbReference type="PDB" id="2XQL">
    <property type="method" value="EM"/>
    <property type="resolution" value="19.50 A"/>
    <property type="chains" value="A/C/E/G/I=16-106"/>
</dbReference>
<dbReference type="PDB" id="3C9K">
    <property type="method" value="EM"/>
    <property type="resolution" value="20.00 A"/>
    <property type="chains" value="A/E=2-129"/>
</dbReference>
<dbReference type="PDBsum" id="1EQZ"/>
<dbReference type="PDBsum" id="1HIO"/>
<dbReference type="PDBsum" id="1HQ3"/>
<dbReference type="PDBsum" id="1TZY"/>
<dbReference type="PDBsum" id="2ARO"/>
<dbReference type="PDBsum" id="2HIO"/>
<dbReference type="PDBsum" id="2XQL"/>
<dbReference type="PDBsum" id="3C9K"/>
<dbReference type="EMDB" id="EMD-1469"/>
<dbReference type="EMDB" id="EMD-1777"/>
<dbReference type="SMR" id="P02263"/>
<dbReference type="BioGRID" id="676813">
    <property type="interactions" value="3"/>
</dbReference>
<dbReference type="FunCoup" id="P02263">
    <property type="interactions" value="742"/>
</dbReference>
<dbReference type="IntAct" id="P02263">
    <property type="interactions" value="3"/>
</dbReference>
<dbReference type="STRING" id="9031.ENSGALP00000044632"/>
<dbReference type="iPTMnet" id="P02263"/>
<dbReference type="PaxDb" id="9031-ENSGALP00000040653"/>
<dbReference type="Ensembl" id="ENSGALT00010029564.1">
    <property type="protein sequence ID" value="ENSGALP00010017191.1"/>
    <property type="gene ID" value="ENSGALG00010012350.1"/>
</dbReference>
<dbReference type="Ensembl" id="ENSGALT00010032636.1">
    <property type="protein sequence ID" value="ENSGALP00010019341.1"/>
    <property type="gene ID" value="ENSGALG00010013579.1"/>
</dbReference>
<dbReference type="GeneID" id="100858459"/>
<dbReference type="GeneID" id="101749238"/>
<dbReference type="GeneID" id="404299"/>
<dbReference type="GeneID" id="417955"/>
<dbReference type="GeneID" id="427881"/>
<dbReference type="GeneID" id="427891"/>
<dbReference type="GeneID" id="427895"/>
<dbReference type="KEGG" id="gga:100858459"/>
<dbReference type="KEGG" id="gga:101749238"/>
<dbReference type="KEGG" id="gga:404299"/>
<dbReference type="KEGG" id="gga:417955"/>
<dbReference type="KEGG" id="gga:427881"/>
<dbReference type="KEGG" id="gga:427891"/>
<dbReference type="KEGG" id="gga:427895"/>
<dbReference type="CTD" id="101749238"/>
<dbReference type="CTD" id="404299"/>
<dbReference type="CTD" id="417955"/>
<dbReference type="CTD" id="427895"/>
<dbReference type="VEuPathDB" id="HostDB:geneid_100858459"/>
<dbReference type="VEuPathDB" id="HostDB:geneid_101749238"/>
<dbReference type="VEuPathDB" id="HostDB:geneid_404299"/>
<dbReference type="VEuPathDB" id="HostDB:geneid_417955"/>
<dbReference type="VEuPathDB" id="HostDB:geneid_427881"/>
<dbReference type="VEuPathDB" id="HostDB:geneid_427891"/>
<dbReference type="VEuPathDB" id="HostDB:geneid_427895"/>
<dbReference type="eggNOG" id="KOG1756">
    <property type="taxonomic scope" value="Eukaryota"/>
</dbReference>
<dbReference type="GeneTree" id="ENSGT00940000161385"/>
<dbReference type="HOGENOM" id="CLU_062828_3_1_1"/>
<dbReference type="InParanoid" id="P02263"/>
<dbReference type="OMA" id="HYSKRVG"/>
<dbReference type="OrthoDB" id="9114051at2759"/>
<dbReference type="PhylomeDB" id="P02263"/>
<dbReference type="TreeFam" id="TF300137"/>
<dbReference type="Reactome" id="R-GGA-201722">
    <property type="pathway name" value="Formation of the beta-catenin:TCF transactivating complex"/>
</dbReference>
<dbReference type="Reactome" id="R-GGA-212300">
    <property type="pathway name" value="PRC2 methylates histones and DNA"/>
</dbReference>
<dbReference type="Reactome" id="R-GGA-2299718">
    <property type="pathway name" value="Condensation of Prophase Chromosomes"/>
</dbReference>
<dbReference type="Reactome" id="R-GGA-2559580">
    <property type="pathway name" value="Oxidative Stress Induced Senescence"/>
</dbReference>
<dbReference type="Reactome" id="R-GGA-3214815">
    <property type="pathway name" value="HDACs deacetylate histones"/>
</dbReference>
<dbReference type="Reactome" id="R-GGA-3214847">
    <property type="pathway name" value="HATs acetylate histones"/>
</dbReference>
<dbReference type="Reactome" id="R-GGA-5250924">
    <property type="pathway name" value="B-WICH complex positively regulates rRNA expression"/>
</dbReference>
<dbReference type="Reactome" id="R-GGA-5578749">
    <property type="pathway name" value="Transcriptional regulation by small RNAs"/>
</dbReference>
<dbReference type="Reactome" id="R-GGA-5625886">
    <property type="pathway name" value="Activated PKN1 stimulates transcription of AR (androgen receptor) regulated genes KLK2 and KLK3"/>
</dbReference>
<dbReference type="Reactome" id="R-GGA-5689603">
    <property type="pathway name" value="UCH proteinases"/>
</dbReference>
<dbReference type="Reactome" id="R-GGA-5689880">
    <property type="pathway name" value="Ub-specific processing proteases"/>
</dbReference>
<dbReference type="Reactome" id="R-GGA-5689901">
    <property type="pathway name" value="Metalloprotease DUBs"/>
</dbReference>
<dbReference type="Reactome" id="R-GGA-606279">
    <property type="pathway name" value="Deposition of new CENPA-containing nucleosomes at the centromere"/>
</dbReference>
<dbReference type="Reactome" id="R-GGA-68616">
    <property type="pathway name" value="Assembly of the ORC complex at the origin of replication"/>
</dbReference>
<dbReference type="Reactome" id="R-GGA-73728">
    <property type="pathway name" value="RNA Polymerase I Promoter Opening"/>
</dbReference>
<dbReference type="Reactome" id="R-GGA-73772">
    <property type="pathway name" value="RNA Polymerase I Promoter Escape"/>
</dbReference>
<dbReference type="Reactome" id="R-GGA-8936459">
    <property type="pathway name" value="RUNX1 regulates genes involved in megakaryocyte differentiation and platelet function"/>
</dbReference>
<dbReference type="Reactome" id="R-GGA-9018519">
    <property type="pathway name" value="Estrogen-dependent gene expression"/>
</dbReference>
<dbReference type="Reactome" id="R-GGA-9841922">
    <property type="pathway name" value="MLL4 and MLL3 complexes regulate expression of PPARG target genes in adipogenesis and hepatic steatosis"/>
</dbReference>
<dbReference type="Reactome" id="R-GGA-9843940">
    <property type="pathway name" value="Regulation of endogenous retroelements by KRAB-ZFP proteins"/>
</dbReference>
<dbReference type="Reactome" id="R-GGA-9843970">
    <property type="pathway name" value="Regulation of endogenous retroelements by the Human Silencing Hub (HUSH) complex"/>
</dbReference>
<dbReference type="EvolutionaryTrace" id="P02263"/>
<dbReference type="PRO" id="PR:P02263"/>
<dbReference type="Proteomes" id="UP000000539">
    <property type="component" value="Chromosome 1"/>
</dbReference>
<dbReference type="Bgee" id="ENSGALG00000031571">
    <property type="expression patterns" value="Expressed in granulocyte and 12 other cell types or tissues"/>
</dbReference>
<dbReference type="GO" id="GO:0000786">
    <property type="term" value="C:nucleosome"/>
    <property type="evidence" value="ECO:0000318"/>
    <property type="project" value="GO_Central"/>
</dbReference>
<dbReference type="GO" id="GO:0005634">
    <property type="term" value="C:nucleus"/>
    <property type="evidence" value="ECO:0000318"/>
    <property type="project" value="GO_Central"/>
</dbReference>
<dbReference type="GO" id="GO:0003677">
    <property type="term" value="F:DNA binding"/>
    <property type="evidence" value="ECO:0007669"/>
    <property type="project" value="UniProtKB-KW"/>
</dbReference>
<dbReference type="GO" id="GO:0046982">
    <property type="term" value="F:protein heterodimerization activity"/>
    <property type="evidence" value="ECO:0007669"/>
    <property type="project" value="InterPro"/>
</dbReference>
<dbReference type="GO" id="GO:0030527">
    <property type="term" value="F:structural constituent of chromatin"/>
    <property type="evidence" value="ECO:0000318"/>
    <property type="project" value="GO_Central"/>
</dbReference>
<dbReference type="GO" id="GO:0031507">
    <property type="term" value="P:heterochromatin formation"/>
    <property type="evidence" value="ECO:0000318"/>
    <property type="project" value="GO_Central"/>
</dbReference>
<dbReference type="CDD" id="cd00074">
    <property type="entry name" value="HFD_H2A"/>
    <property type="match status" value="1"/>
</dbReference>
<dbReference type="DisProt" id="DP01205"/>
<dbReference type="FunFam" id="1.10.20.10:FF:000004">
    <property type="entry name" value="Histone H2A"/>
    <property type="match status" value="1"/>
</dbReference>
<dbReference type="Gene3D" id="1.10.20.10">
    <property type="entry name" value="Histone, subunit A"/>
    <property type="match status" value="1"/>
</dbReference>
<dbReference type="InterPro" id="IPR009072">
    <property type="entry name" value="Histone-fold"/>
</dbReference>
<dbReference type="InterPro" id="IPR002119">
    <property type="entry name" value="Histone_H2A"/>
</dbReference>
<dbReference type="InterPro" id="IPR007125">
    <property type="entry name" value="Histone_H2A/H2B/H3"/>
</dbReference>
<dbReference type="InterPro" id="IPR032454">
    <property type="entry name" value="Histone_H2A_C"/>
</dbReference>
<dbReference type="InterPro" id="IPR032458">
    <property type="entry name" value="Histone_H2A_CS"/>
</dbReference>
<dbReference type="PANTHER" id="PTHR23430">
    <property type="entry name" value="HISTONE H2A"/>
    <property type="match status" value="1"/>
</dbReference>
<dbReference type="Pfam" id="PF00125">
    <property type="entry name" value="Histone"/>
    <property type="match status" value="1"/>
</dbReference>
<dbReference type="Pfam" id="PF16211">
    <property type="entry name" value="Histone_H2A_C"/>
    <property type="match status" value="1"/>
</dbReference>
<dbReference type="PRINTS" id="PR00620">
    <property type="entry name" value="HISTONEH2A"/>
</dbReference>
<dbReference type="SMART" id="SM00414">
    <property type="entry name" value="H2A"/>
    <property type="match status" value="1"/>
</dbReference>
<dbReference type="SUPFAM" id="SSF47113">
    <property type="entry name" value="Histone-fold"/>
    <property type="match status" value="1"/>
</dbReference>
<dbReference type="PROSITE" id="PS00046">
    <property type="entry name" value="HISTONE_H2A"/>
    <property type="match status" value="1"/>
</dbReference>
<reference key="1">
    <citation type="journal article" date="1985" name="Nucleic Acids Res.">
        <title>Inverted duplication of histone genes in chicken and disposition of regulatory sequences.</title>
        <authorList>
            <person name="Wang S.W."/>
            <person name="Robins A.J."/>
            <person name="D'Andrea R."/>
            <person name="Wells J.R.E."/>
        </authorList>
    </citation>
    <scope>NUCLEOTIDE SEQUENCE [GENOMIC DNA]</scope>
</reference>
<reference key="2">
    <citation type="submission" date="1992-04" db="EMBL/GenBank/DDBJ databases">
        <authorList>
            <person name="Takechi S."/>
            <person name="Ohsige T."/>
            <person name="Nakayama T."/>
        </authorList>
    </citation>
    <scope>NUCLEOTIDE SEQUENCE [GENOMIC DNA]</scope>
</reference>
<reference key="3">
    <citation type="journal article" date="1981" name="Nucleic Acids Res.">
        <title>Vertebrate histone genes: nucleotide sequence of a chicken H2A gene and regulatory flanking sequences.</title>
        <authorList>
            <person name="D'Andrea R."/>
            <person name="Harvey R.P."/>
            <person name="Wells J.R.E."/>
        </authorList>
    </citation>
    <scope>NUCLEOTIDE SEQUENCE [GENOMIC DNA]</scope>
</reference>
<reference key="4">
    <citation type="journal article" date="1978" name="Biochimie">
        <title>Primary structure of chicken erythrocyte histone H2A.</title>
        <authorList>
            <person name="Laine B."/>
            <person name="Kmiecik D."/>
            <person name="Sautiere P."/>
            <person name="Biserte G."/>
        </authorList>
    </citation>
    <scope>PROTEIN SEQUENCE OF 2-129</scope>
    <scope>ACETYLATION AT SER-2</scope>
    <source>
        <tissue>Erythrocyte</tissue>
    </source>
</reference>
<reference key="5">
    <citation type="journal article" date="2003" name="J. Chromatogr. B">
        <title>Analysis of core histones by liquid chromatography-mass spectrometry and peptide mapping.</title>
        <authorList>
            <person name="Zhang K."/>
            <person name="Tang H."/>
        </authorList>
    </citation>
    <scope>PROTEIN SEQUENCE OF 5-12</scope>
    <scope>ACETYLATION AT LYS-6 AND LYS-10</scope>
    <scope>IDENTIFICATION BY MASS SPECTROMETRY</scope>
</reference>
<reference key="6">
    <citation type="journal article" date="1989" name="Biochemistry">
        <title>Ubiquitinated histone H2B is preferentially located in transcriptionally active chromatin.</title>
        <authorList>
            <person name="Nickel B.E."/>
            <person name="Allis C.D."/>
            <person name="Davie J.R."/>
        </authorList>
    </citation>
    <scope>UBIQUITINATION</scope>
</reference>
<reference key="7">
    <citation type="journal article" date="1991" name="Proc. Natl. Acad. Sci. U.S.A.">
        <title>The nucleosomal core histone octamer at 3.1 A resolution: a tripartite protein assembly and a left-handed superhelix.</title>
        <authorList>
            <person name="Arents G."/>
            <person name="Burlingame R.W."/>
            <person name="Wang B.-C."/>
            <person name="Love W.E."/>
            <person name="Moudrianakis E.N."/>
        </authorList>
    </citation>
    <scope>X-RAY CRYSTALLOGRAPHY (3.1 ANGSTROMS)</scope>
</reference>
<protein>
    <recommendedName>
        <fullName>Histone H2A-IV</fullName>
    </recommendedName>
</protein>
<organism>
    <name type="scientific">Gallus gallus</name>
    <name type="common">Chicken</name>
    <dbReference type="NCBI Taxonomy" id="9031"/>
    <lineage>
        <taxon>Eukaryota</taxon>
        <taxon>Metazoa</taxon>
        <taxon>Chordata</taxon>
        <taxon>Craniata</taxon>
        <taxon>Vertebrata</taxon>
        <taxon>Euteleostomi</taxon>
        <taxon>Archelosauria</taxon>
        <taxon>Archosauria</taxon>
        <taxon>Dinosauria</taxon>
        <taxon>Saurischia</taxon>
        <taxon>Theropoda</taxon>
        <taxon>Coelurosauria</taxon>
        <taxon>Aves</taxon>
        <taxon>Neognathae</taxon>
        <taxon>Galloanserae</taxon>
        <taxon>Galliformes</taxon>
        <taxon>Phasianidae</taxon>
        <taxon>Phasianinae</taxon>
        <taxon>Gallus</taxon>
    </lineage>
</organism>
<accession>P02263</accession>
<comment type="function">
    <text>Core component of nucleosome. Nucleosomes wrap and compact DNA into chromatin, limiting DNA accessibility to the cellular machineries which require DNA as a template. Histones thereby play a central role in transcription regulation, DNA repair, DNA replication and chromosomal stability. DNA accessibility is regulated via a complex set of post-translational modifications of histones, also called histone code, and nucleosome remodeling.</text>
</comment>
<comment type="subunit">
    <text>The nucleosome is a histone octamer containing two molecules each of H2A, H2B, H3 and H4 assembled in one H3-H4 heterotetramer and two H2A-H2B heterodimers. The octamer wraps approximately 147 bp of DNA.</text>
</comment>
<comment type="subcellular location">
    <subcellularLocation>
        <location>Nucleus</location>
    </subcellularLocation>
    <subcellularLocation>
        <location>Chromosome</location>
    </subcellularLocation>
</comment>
<comment type="PTM">
    <text evidence="1">Monoubiquitination of Lys-120 (H2AK119Ub) gives a specific tag for epigenetic transcriptional repression. Following DNA double-strand breaks (DSBs), it is ubiquitinated through 'Lys-63' linkage of ubiquitin moieties, leading to the recruitment of repair proteins to sites of DNA damage. H2AK119Ub and ionizing radiation-induced 'Lys-63'-linked ubiquitination are distinct events (By similarity).</text>
</comment>
<comment type="PTM">
    <text evidence="1">Phosphorylation on Ser-2 is enhanced during mitosis. Phosphorylation on Ser-2 directly represses transcription (By similarity).</text>
</comment>
<comment type="PTM">
    <text evidence="1">Glutamine methylation at Gln-105 (H2AQ104me) by FBL is specifically dedicated to polymerase I. It is present at 35S ribosomal DNA locus and impairs binding of the FACT complex (By similarity).</text>
</comment>
<comment type="similarity">
    <text evidence="7">Belongs to the histone H2A family.</text>
</comment>